<dbReference type="EMBL" id="AY204473">
    <property type="protein sequence ID" value="AAO34667.1"/>
    <property type="molecule type" value="mRNA"/>
</dbReference>
<dbReference type="RefSeq" id="NP_001075620.1">
    <property type="nucleotide sequence ID" value="NM_001082151.2"/>
</dbReference>
<dbReference type="SMR" id="Q865P3"/>
<dbReference type="FunCoup" id="Q865P3">
    <property type="interactions" value="48"/>
</dbReference>
<dbReference type="STRING" id="9986.ENSOCUP00000021164"/>
<dbReference type="PaxDb" id="9986-ENSOCUP00000017122"/>
<dbReference type="GeneID" id="100008900"/>
<dbReference type="KEGG" id="ocu:100008900"/>
<dbReference type="CTD" id="5174"/>
<dbReference type="eggNOG" id="KOG3528">
    <property type="taxonomic scope" value="Eukaryota"/>
</dbReference>
<dbReference type="InParanoid" id="Q865P3"/>
<dbReference type="OrthoDB" id="10009200at2759"/>
<dbReference type="Proteomes" id="UP000001811">
    <property type="component" value="Unplaced"/>
</dbReference>
<dbReference type="GO" id="GO:0016324">
    <property type="term" value="C:apical plasma membrane"/>
    <property type="evidence" value="ECO:0007669"/>
    <property type="project" value="TreeGrafter"/>
</dbReference>
<dbReference type="GO" id="GO:0031526">
    <property type="term" value="C:brush border membrane"/>
    <property type="evidence" value="ECO:0000250"/>
    <property type="project" value="UniProtKB"/>
</dbReference>
<dbReference type="GO" id="GO:0005886">
    <property type="term" value="C:plasma membrane"/>
    <property type="evidence" value="ECO:0000250"/>
    <property type="project" value="UniProtKB"/>
</dbReference>
<dbReference type="GO" id="GO:0043495">
    <property type="term" value="F:protein-membrane adaptor activity"/>
    <property type="evidence" value="ECO:0007669"/>
    <property type="project" value="TreeGrafter"/>
</dbReference>
<dbReference type="GO" id="GO:0005102">
    <property type="term" value="F:signaling receptor binding"/>
    <property type="evidence" value="ECO:0007669"/>
    <property type="project" value="TreeGrafter"/>
</dbReference>
<dbReference type="GO" id="GO:0090314">
    <property type="term" value="P:positive regulation of protein targeting to membrane"/>
    <property type="evidence" value="ECO:0000250"/>
    <property type="project" value="UniProtKB"/>
</dbReference>
<dbReference type="GO" id="GO:0072659">
    <property type="term" value="P:protein localization to plasma membrane"/>
    <property type="evidence" value="ECO:0007669"/>
    <property type="project" value="TreeGrafter"/>
</dbReference>
<dbReference type="GO" id="GO:0044070">
    <property type="term" value="P:regulation of monoatomic anion transport"/>
    <property type="evidence" value="ECO:0000250"/>
    <property type="project" value="UniProtKB"/>
</dbReference>
<dbReference type="CDD" id="cd06768">
    <property type="entry name" value="PDZ_NHERF-like"/>
    <property type="match status" value="4"/>
</dbReference>
<dbReference type="FunFam" id="2.30.42.10:FF:000187">
    <property type="entry name" value="Na(+)/H(+) exchange regulatory cofactor NHE-RF3"/>
    <property type="match status" value="1"/>
</dbReference>
<dbReference type="FunFam" id="2.30.42.10:FF:000211">
    <property type="entry name" value="Na(+)/H(+) exchange regulatory cofactor NHE-RF3"/>
    <property type="match status" value="1"/>
</dbReference>
<dbReference type="FunFam" id="2.30.42.10:FF:000166">
    <property type="entry name" value="Na(+)/H(+) exchange regulatory cofactor NHE-RF3 isoform X1"/>
    <property type="match status" value="1"/>
</dbReference>
<dbReference type="FunFam" id="2.30.42.10:FF:000123">
    <property type="entry name" value="Na(+)/H(+) exchange regulatory cofactor NHE-RF4"/>
    <property type="match status" value="1"/>
</dbReference>
<dbReference type="Gene3D" id="2.30.42.10">
    <property type="match status" value="4"/>
</dbReference>
<dbReference type="InterPro" id="IPR051067">
    <property type="entry name" value="NHER"/>
</dbReference>
<dbReference type="InterPro" id="IPR001478">
    <property type="entry name" value="PDZ"/>
</dbReference>
<dbReference type="InterPro" id="IPR041489">
    <property type="entry name" value="PDZ_6"/>
</dbReference>
<dbReference type="InterPro" id="IPR036034">
    <property type="entry name" value="PDZ_sf"/>
</dbReference>
<dbReference type="PANTHER" id="PTHR14191:SF6">
    <property type="entry name" value="NA(+)_H(+) EXCHANGE REGULATORY COFACTOR NHE-RF3-RELATED"/>
    <property type="match status" value="1"/>
</dbReference>
<dbReference type="PANTHER" id="PTHR14191">
    <property type="entry name" value="PDZ DOMAIN CONTAINING PROTEIN"/>
    <property type="match status" value="1"/>
</dbReference>
<dbReference type="Pfam" id="PF00595">
    <property type="entry name" value="PDZ"/>
    <property type="match status" value="3"/>
</dbReference>
<dbReference type="Pfam" id="PF17820">
    <property type="entry name" value="PDZ_6"/>
    <property type="match status" value="1"/>
</dbReference>
<dbReference type="SMART" id="SM00228">
    <property type="entry name" value="PDZ"/>
    <property type="match status" value="4"/>
</dbReference>
<dbReference type="SUPFAM" id="SSF50156">
    <property type="entry name" value="PDZ domain-like"/>
    <property type="match status" value="4"/>
</dbReference>
<dbReference type="PROSITE" id="PS50106">
    <property type="entry name" value="PDZ"/>
    <property type="match status" value="4"/>
</dbReference>
<feature type="chain" id="PRO_0000058290" description="Na(+)/H(+) exchange regulatory cofactor NHE-RF3">
    <location>
        <begin position="1"/>
        <end position="518"/>
    </location>
</feature>
<feature type="domain" description="PDZ 1" evidence="5">
    <location>
        <begin position="9"/>
        <end position="90"/>
    </location>
</feature>
<feature type="domain" description="PDZ 2" evidence="5">
    <location>
        <begin position="135"/>
        <end position="215"/>
    </location>
</feature>
<feature type="domain" description="PDZ 3" evidence="5">
    <location>
        <begin position="243"/>
        <end position="323"/>
    </location>
</feature>
<feature type="domain" description="PDZ 4" evidence="5">
    <location>
        <begin position="378"/>
        <end position="458"/>
    </location>
</feature>
<feature type="region of interest" description="Disordered" evidence="6">
    <location>
        <begin position="499"/>
        <end position="518"/>
    </location>
</feature>
<feature type="compositionally biased region" description="Low complexity" evidence="6">
    <location>
        <begin position="507"/>
        <end position="518"/>
    </location>
</feature>
<feature type="modified residue" description="Phosphoserine" evidence="4">
    <location>
        <position position="108"/>
    </location>
</feature>
<feature type="modified residue" description="Phosphoserine" evidence="2">
    <location>
        <position position="148"/>
    </location>
</feature>
<feature type="modified residue" description="Phosphoserine" evidence="3">
    <location>
        <position position="192"/>
    </location>
</feature>
<feature type="modified residue" description="Phosphoserine" evidence="3">
    <location>
        <position position="250"/>
    </location>
</feature>
<feature type="modified residue" description="Phosphoserine" evidence="3">
    <location>
        <position position="334"/>
    </location>
</feature>
<feature type="modified residue" description="Phosphoserine" evidence="3">
    <location>
        <position position="348"/>
    </location>
</feature>
<feature type="modified residue" description="Phosphothreonine" evidence="3">
    <location>
        <position position="451"/>
    </location>
</feature>
<feature type="modified residue" description="Phosphoserine" evidence="3">
    <location>
        <position position="507"/>
    </location>
</feature>
<feature type="modified residue" description="Phosphoserine" evidence="3">
    <location>
        <position position="509"/>
    </location>
</feature>
<feature type="modified residue" description="Phosphoserine" evidence="3">
    <location>
        <position position="510"/>
    </location>
</feature>
<feature type="modified residue" description="Phosphoserine" evidence="3">
    <location>
        <position position="511"/>
    </location>
</feature>
<feature type="modified residue" description="Phosphoserine" evidence="3">
    <location>
        <position position="513"/>
    </location>
</feature>
<accession>Q865P3</accession>
<organism>
    <name type="scientific">Oryctolagus cuniculus</name>
    <name type="common">Rabbit</name>
    <dbReference type="NCBI Taxonomy" id="9986"/>
    <lineage>
        <taxon>Eukaryota</taxon>
        <taxon>Metazoa</taxon>
        <taxon>Chordata</taxon>
        <taxon>Craniata</taxon>
        <taxon>Vertebrata</taxon>
        <taxon>Euteleostomi</taxon>
        <taxon>Mammalia</taxon>
        <taxon>Eutheria</taxon>
        <taxon>Euarchontoglires</taxon>
        <taxon>Glires</taxon>
        <taxon>Lagomorpha</taxon>
        <taxon>Leporidae</taxon>
        <taxon>Oryctolagus</taxon>
    </lineage>
</organism>
<name>NHRF3_RABIT</name>
<protein>
    <recommendedName>
        <fullName>Na(+)/H(+) exchange regulatory cofactor NHE-RF3</fullName>
        <shortName>NHERF-3</shortName>
    </recommendedName>
    <alternativeName>
        <fullName>CFTR-associated protein of 70 kDa</fullName>
    </alternativeName>
    <alternativeName>
        <fullName>Na(+)/H(+) exchanger regulatory factor 3</fullName>
    </alternativeName>
    <alternativeName>
        <fullName>PDZ domain-containing protein 1</fullName>
    </alternativeName>
    <alternativeName>
        <fullName>Sodium-hydrogen exchanger regulatory factor 3</fullName>
    </alternativeName>
</protein>
<proteinExistence type="evidence at protein level"/>
<evidence type="ECO:0000250" key="1"/>
<evidence type="ECO:0000250" key="2">
    <source>
        <dbReference type="UniProtKB" id="Q5T2W1"/>
    </source>
</evidence>
<evidence type="ECO:0000250" key="3">
    <source>
        <dbReference type="UniProtKB" id="Q9JIL4"/>
    </source>
</evidence>
<evidence type="ECO:0000250" key="4">
    <source>
        <dbReference type="UniProtKB" id="Q9JJ40"/>
    </source>
</evidence>
<evidence type="ECO:0000255" key="5">
    <source>
        <dbReference type="PROSITE-ProRule" id="PRU00143"/>
    </source>
</evidence>
<evidence type="ECO:0000256" key="6">
    <source>
        <dbReference type="SAM" id="MobiDB-lite"/>
    </source>
</evidence>
<evidence type="ECO:0000269" key="7">
    <source>
    </source>
</evidence>
<evidence type="ECO:0000269" key="8">
    <source>
    </source>
</evidence>
<evidence type="ECO:0000305" key="9"/>
<gene>
    <name type="primary">PDZK1</name>
    <name type="synonym">CAP70</name>
    <name type="synonym">NHERF3</name>
</gene>
<sequence>MASTFNPRECKLSKEEGQNYGFFLRIEKDTEGHLVRVIEKGSPAEKAGLQDGDRVLRINGVFVDKEEHMQVVDLVRKSGNAVTLLVLDGNSYEKAVKKQVDLKELGQSRQEADLRDENVAPVMNGGVETWTQPRLCYLEKQGNSYGFSLKTVQGKKGVYMTDIIPQSVAMKAGVLADDHLIEVNGENVEDASHEEVVEKVKKSGNRIVFLLVDKETEKRHSEQKIEFRREAASLKLLPHQPRIVEMKKGSSGYGFYLKAGPEQRGQIIKDIDSGSPAEAAGLKNNDLVIAVNGKSVEALDHDGVVELIKKGGDQTSLLVVDKEADSMYRLAHFSPFLYYQSQELPNGSVTEVAAPTPVPPEVSSPDPTEEVEDHKPKLCRLDKGENGYGFHLNAIRGLPGSFVKEVQKGSPADLAGLEDEDIIIEVNGVNVLDEPYEKVVDRIQSSGDNVTLLVCGKKAYEYFQAKKIPIVSSMALPLAIPADSQGMLAELEYNLHEAKERAHSTASNSSSNSEDTEL</sequence>
<comment type="function">
    <text evidence="1 7">A scaffold protein that connects plasma membrane proteins and regulatory components, regulating their surface expression in epithelial cells apical domains. May be involved in the coordination of a diverse range of regulatory processes for ion transport and second messenger cascades. In complex with NHERF1, may cluster proteins that are functionally dependent in a mutual fashion and modulate the trafficking and the activity of the associated membrane proteins. May play a role in the cellular mechanisms associated with multidrug resistance through its interaction with ABCC2 and PDZK1IP1. May potentiate the CFTR chloride channel activity. Required for normal cell-surface expression of SCARB1. Plays a role in maintaining normal plasma cholesterol levels via its effects on SCARB1. Plays a role in the normal localization and function of the chloride-anion exchanger SLC26A6 to the plasma membrane in the brush border of the proximal tubule of the kidney. May be involved in the regulation of proximal tubular Na(+)-dependent inorganic phosphate cotransport therefore playing an important role in tubule function (By similarity).</text>
</comment>
<comment type="subunit">
    <text evidence="2 3 7 8">Interacts with PDZK1IP1 and ABCC2. Interacts (via PDZ domains 1 and 3) with SCARB1 (C-terminal domain). Forms a heterodimeric complex with NHERF1. Interacts with AKAP2, BCR, CFTR, SLCO1A1, SLC22A12, SLC22A4, SLC22A5, NHERF2 and SLC17A1. Component of a complex, composed of PDZK1, SYNGAP1, KLHL17 and NMDA receptors. Interacts (via PDZ1 domain) directly with KLHL17; the interaction is important for integrity of actin cytoskeleton structures in neurons. Interacts (via C-terminal PDZ domain) with SLC9A3 (via C-terminal domain). Interacts (via the first PDZ domain) with PTGIR (via non-isoprenylated C-terminus) (By similarity). Binds to the C-terminal region of SLC26A3. Interacts (via C-terminal PDZ domain) with SLC26A6 (via C-terminal domain). Interacts (via PDZ domains 1 and 3) with SLC5A8 (via PDZ-binding motif); interaction increases nicotinate transport activity of SLC5A8 (By similarity).</text>
</comment>
<comment type="subcellular location">
    <subcellularLocation>
        <location evidence="4">Membrane</location>
        <topology evidence="4">Peripheral membrane protein</topology>
    </subcellularLocation>
    <subcellularLocation>
        <location evidence="3">Cell membrane</location>
    </subcellularLocation>
    <text evidence="4">Associated with peripheral membranes. Localizes to the apical compartment of proximal tubular cells and to sinusoidal liver membranes.</text>
</comment>
<comment type="tissue specificity">
    <text evidence="7">Highly expressed in the brush border membrane of duodenal and ileal mucosa.</text>
</comment>
<comment type="domain">
    <text evidence="1">The PDZ 2 and 3 domains seem to be involved in the interaction with SLC26A3.</text>
</comment>
<comment type="domain">
    <text evidence="1">Interaction with the C-terminus of CFTR could be mediated through independent binding of PDZ 1, 3 and 4 domains.</text>
</comment>
<comment type="domain">
    <text evidence="1">The PDZ 1 and 3 domains seem to be involved in the interaction with SLCO1A1.</text>
</comment>
<comment type="domain">
    <text evidence="1">The PDZ 1 domain interacts with BCR.</text>
</comment>
<comment type="domain">
    <text evidence="1">The PDZ 2 and 4 domains do not interact with the C-terminal region of SCARB1.</text>
</comment>
<comment type="similarity">
    <text evidence="9">Belongs to the NHER family.</text>
</comment>
<reference key="1">
    <citation type="journal article" date="2005" name="Biochemistry">
        <title>The CFTR associated protein CAP70 interacts with the apical Cl-/HCO3-exchanger DRA in rabbit small intestinal mucosa.</title>
        <authorList>
            <person name="Rossmann H."/>
            <person name="Jacob P."/>
            <person name="Baisch S."/>
            <person name="Hassoun R."/>
            <person name="Meier J."/>
            <person name="Natour D."/>
            <person name="Yahya K."/>
            <person name="Yun C."/>
            <person name="Biber J."/>
            <person name="Lackner K.J."/>
            <person name="Fiehn W."/>
            <person name="Gregor M."/>
            <person name="Seidler U."/>
            <person name="Lamprecht G."/>
        </authorList>
    </citation>
    <scope>NUCLEOTIDE SEQUENCE [MRNA]</scope>
    <scope>FUNCTION</scope>
    <scope>TISSUE SPECIFICITY</scope>
    <scope>INTERACTION WITH SLC26A3</scope>
</reference>
<reference key="2">
    <citation type="journal article" date="2005" name="Proc. Natl. Acad. Sci. U.S.A.">
        <title>Role of PDZK1 in membrane expression of renal brush border ion exchangers.</title>
        <authorList>
            <person name="Thomson R.B."/>
            <person name="Wang T."/>
            <person name="Thomson B.R."/>
            <person name="Tarrats L."/>
            <person name="Girardi A."/>
            <person name="Mentone S."/>
            <person name="Soleimani M."/>
            <person name="Kocher O."/>
            <person name="Aronson P.S."/>
        </authorList>
    </citation>
    <scope>INTERACTION WITH SLC26A6</scope>
</reference>
<keyword id="KW-1003">Cell membrane</keyword>
<keyword id="KW-0472">Membrane</keyword>
<keyword id="KW-0597">Phosphoprotein</keyword>
<keyword id="KW-1185">Reference proteome</keyword>
<keyword id="KW-0677">Repeat</keyword>